<name>CU187_LOCMI</name>
<sequence>GYLSLPADTPEVAAAKVAHFAAYNAAAARSAGVVAVAPSYGYAAYGPANIVIGADGVPLDTPEVAARKAADAVAHARAAAGLPAVGPVPAAVVPAVVGSVPADTPEVAAAKVAHAAAHVEANVRNAAEAVGIHGLYGVVPSVYSYGVVPGAYSVHYDGTLLTPDGVPLDTPAVAAGKVANAVAHIKAKSGLIV</sequence>
<evidence type="ECO:0000269" key="1">
    <source>
    </source>
</evidence>
<evidence type="ECO:0000305" key="2"/>
<organism>
    <name type="scientific">Locusta migratoria</name>
    <name type="common">Migratory locust</name>
    <dbReference type="NCBI Taxonomy" id="7004"/>
    <lineage>
        <taxon>Eukaryota</taxon>
        <taxon>Metazoa</taxon>
        <taxon>Ecdysozoa</taxon>
        <taxon>Arthropoda</taxon>
        <taxon>Hexapoda</taxon>
        <taxon>Insecta</taxon>
        <taxon>Pterygota</taxon>
        <taxon>Neoptera</taxon>
        <taxon>Polyneoptera</taxon>
        <taxon>Orthoptera</taxon>
        <taxon>Caelifera</taxon>
        <taxon>Acrididea</taxon>
        <taxon>Acridomorpha</taxon>
        <taxon>Acridoidea</taxon>
        <taxon>Acrididae</taxon>
        <taxon>Oedipodinae</taxon>
        <taxon>Locusta</taxon>
    </lineage>
</organism>
<protein>
    <recommendedName>
        <fullName>Cuticle protein 18.7</fullName>
    </recommendedName>
    <alternativeName>
        <fullName>LmNCP18.7</fullName>
    </alternativeName>
</protein>
<proteinExistence type="evidence at protein level"/>
<reference evidence="2" key="1">
    <citation type="journal article" date="2000" name="Insect Biochem. Mol. Biol.">
        <title>Studies on proteins in post-ecdysial nymphal cuticle of locust, Locusta migratoria, and cockroach, Blaberus craniifer.</title>
        <authorList>
            <person name="Andersen S.O."/>
        </authorList>
    </citation>
    <scope>PROTEIN SEQUENCE</scope>
    <scope>MASS SPECTROMETRY</scope>
    <source>
        <tissue evidence="1">Fifth instar larvae cuticle</tissue>
    </source>
</reference>
<comment type="function">
    <text evidence="2">Component of the cuticle of migratory locust which contains more than 100 different structural proteins.</text>
</comment>
<comment type="mass spectrometry"/>
<keyword id="KW-0193">Cuticle</keyword>
<keyword id="KW-0903">Direct protein sequencing</keyword>
<feature type="chain" id="PRO_0000252035" description="Cuticle protein 18.7">
    <location>
        <begin position="1"/>
        <end position="193"/>
    </location>
</feature>
<dbReference type="GO" id="GO:0042302">
    <property type="term" value="F:structural constituent of cuticle"/>
    <property type="evidence" value="ECO:0007669"/>
    <property type="project" value="UniProtKB-KW"/>
</dbReference>
<accession>P82165</accession>